<keyword id="KW-0119">Carbohydrate metabolism</keyword>
<keyword id="KW-0963">Cytoplasm</keyword>
<keyword id="KW-0378">Hydrolase</keyword>
<keyword id="KW-0460">Magnesium</keyword>
<keyword id="KW-0464">Manganese</keyword>
<keyword id="KW-0479">Metal-binding</keyword>
<keyword id="KW-1185">Reference proteome</keyword>
<dbReference type="EC" id="3.1.3.11"/>
<dbReference type="EMBL" id="BA000036">
    <property type="protein sequence ID" value="BAB98412.1"/>
    <property type="status" value="ALT_INIT"/>
    <property type="molecule type" value="Genomic_DNA"/>
</dbReference>
<dbReference type="EMBL" id="BX927151">
    <property type="protein sequence ID" value="CAF19721.1"/>
    <property type="molecule type" value="Genomic_DNA"/>
</dbReference>
<dbReference type="RefSeq" id="NP_600242.1">
    <property type="nucleotide sequence ID" value="NC_003450.3"/>
</dbReference>
<dbReference type="RefSeq" id="WP_003856830.1">
    <property type="nucleotide sequence ID" value="NC_006958.1"/>
</dbReference>
<dbReference type="SMR" id="Q6M6E7"/>
<dbReference type="STRING" id="196627.cg1157"/>
<dbReference type="GeneID" id="1019005"/>
<dbReference type="KEGG" id="cgb:cg1157"/>
<dbReference type="KEGG" id="cgl:Cgl1019"/>
<dbReference type="PATRIC" id="fig|196627.13.peg.997"/>
<dbReference type="eggNOG" id="COG1494">
    <property type="taxonomic scope" value="Bacteria"/>
</dbReference>
<dbReference type="HOGENOM" id="CLU_054938_0_0_11"/>
<dbReference type="OrthoDB" id="9779353at2"/>
<dbReference type="BioCyc" id="CORYNE:G18NG-10591-MONOMER"/>
<dbReference type="SABIO-RK" id="Q6M6E7"/>
<dbReference type="UniPathway" id="UPA00138"/>
<dbReference type="Proteomes" id="UP000000582">
    <property type="component" value="Chromosome"/>
</dbReference>
<dbReference type="Proteomes" id="UP000001009">
    <property type="component" value="Chromosome"/>
</dbReference>
<dbReference type="GO" id="GO:0005829">
    <property type="term" value="C:cytosol"/>
    <property type="evidence" value="ECO:0007669"/>
    <property type="project" value="TreeGrafter"/>
</dbReference>
<dbReference type="GO" id="GO:0042132">
    <property type="term" value="F:fructose 1,6-bisphosphate 1-phosphatase activity"/>
    <property type="evidence" value="ECO:0000314"/>
    <property type="project" value="UniProtKB"/>
</dbReference>
<dbReference type="GO" id="GO:0000287">
    <property type="term" value="F:magnesium ion binding"/>
    <property type="evidence" value="ECO:0000314"/>
    <property type="project" value="UniProtKB"/>
</dbReference>
<dbReference type="GO" id="GO:0030145">
    <property type="term" value="F:manganese ion binding"/>
    <property type="evidence" value="ECO:0000314"/>
    <property type="project" value="UniProtKB"/>
</dbReference>
<dbReference type="GO" id="GO:0030388">
    <property type="term" value="P:fructose 1,6-bisphosphate metabolic process"/>
    <property type="evidence" value="ECO:0000314"/>
    <property type="project" value="UniProtKB"/>
</dbReference>
<dbReference type="GO" id="GO:0006094">
    <property type="term" value="P:gluconeogenesis"/>
    <property type="evidence" value="ECO:0000315"/>
    <property type="project" value="UniProtKB"/>
</dbReference>
<dbReference type="GO" id="GO:0006071">
    <property type="term" value="P:glycerol metabolic process"/>
    <property type="evidence" value="ECO:0007669"/>
    <property type="project" value="InterPro"/>
</dbReference>
<dbReference type="CDD" id="cd01516">
    <property type="entry name" value="FBPase_glpX"/>
    <property type="match status" value="1"/>
</dbReference>
<dbReference type="FunFam" id="3.40.190.90:FF:000001">
    <property type="entry name" value="Fructose-1,6-bisphosphatase"/>
    <property type="match status" value="1"/>
</dbReference>
<dbReference type="Gene3D" id="3.40.190.90">
    <property type="match status" value="1"/>
</dbReference>
<dbReference type="Gene3D" id="3.30.540.10">
    <property type="entry name" value="Fructose-1,6-Bisphosphatase, subunit A, domain 1"/>
    <property type="match status" value="1"/>
</dbReference>
<dbReference type="InterPro" id="IPR004464">
    <property type="entry name" value="FBPase_class-2/SBPase"/>
</dbReference>
<dbReference type="NCBIfam" id="TIGR00330">
    <property type="entry name" value="glpX"/>
    <property type="match status" value="1"/>
</dbReference>
<dbReference type="PANTHER" id="PTHR30447:SF0">
    <property type="entry name" value="FRUCTOSE-1,6-BISPHOSPHATASE 1 CLASS 2-RELATED"/>
    <property type="match status" value="1"/>
</dbReference>
<dbReference type="PANTHER" id="PTHR30447">
    <property type="entry name" value="FRUCTOSE-1,6-BISPHOSPHATASE CLASS 2"/>
    <property type="match status" value="1"/>
</dbReference>
<dbReference type="Pfam" id="PF03320">
    <property type="entry name" value="FBPase_glpX"/>
    <property type="match status" value="1"/>
</dbReference>
<dbReference type="PIRSF" id="PIRSF004532">
    <property type="entry name" value="GlpX"/>
    <property type="match status" value="1"/>
</dbReference>
<dbReference type="SUPFAM" id="SSF56655">
    <property type="entry name" value="Carbohydrate phosphatase"/>
    <property type="match status" value="1"/>
</dbReference>
<accession>Q6M6E7</accession>
<accession>Q8NRM9</accession>
<evidence type="ECO:0000250" key="1"/>
<evidence type="ECO:0000269" key="2">
    <source>
    </source>
</evidence>
<evidence type="ECO:0000305" key="3"/>
<organism>
    <name type="scientific">Corynebacterium glutamicum (strain ATCC 13032 / DSM 20300 / JCM 1318 / BCRC 11384 / CCUG 27702 / LMG 3730 / NBRC 12168 / NCIMB 10025 / NRRL B-2784 / 534)</name>
    <dbReference type="NCBI Taxonomy" id="196627"/>
    <lineage>
        <taxon>Bacteria</taxon>
        <taxon>Bacillati</taxon>
        <taxon>Actinomycetota</taxon>
        <taxon>Actinomycetes</taxon>
        <taxon>Mycobacteriales</taxon>
        <taxon>Corynebacteriaceae</taxon>
        <taxon>Corynebacterium</taxon>
    </lineage>
</organism>
<proteinExistence type="evidence at protein level"/>
<feature type="chain" id="PRO_0000403985" description="Fructose-1,6-bisphosphatase class 2">
    <location>
        <begin position="1"/>
        <end position="335"/>
    </location>
</feature>
<feature type="binding site" evidence="1">
    <location>
        <position position="41"/>
    </location>
    <ligand>
        <name>Mn(2+)</name>
        <dbReference type="ChEBI" id="CHEBI:29035"/>
        <label>1</label>
    </ligand>
</feature>
<feature type="binding site" evidence="1">
    <location>
        <position position="65"/>
    </location>
    <ligand>
        <name>Mn(2+)</name>
        <dbReference type="ChEBI" id="CHEBI:29035"/>
        <label>1</label>
    </ligand>
</feature>
<feature type="binding site" evidence="1">
    <location>
        <position position="93"/>
    </location>
    <ligand>
        <name>Mn(2+)</name>
        <dbReference type="ChEBI" id="CHEBI:29035"/>
        <label>2</label>
    </ligand>
</feature>
<feature type="binding site" evidence="1">
    <location>
        <begin position="96"/>
        <end position="98"/>
    </location>
    <ligand>
        <name>substrate</name>
    </ligand>
</feature>
<feature type="binding site" evidence="1">
    <location>
        <position position="96"/>
    </location>
    <ligand>
        <name>Mn(2+)</name>
        <dbReference type="ChEBI" id="CHEBI:29035"/>
        <label>2</label>
    </ligand>
</feature>
<feature type="binding site" evidence="1">
    <location>
        <position position="128"/>
    </location>
    <ligand>
        <name>substrate</name>
    </ligand>
</feature>
<feature type="binding site" evidence="1">
    <location>
        <begin position="173"/>
        <end position="175"/>
    </location>
    <ligand>
        <name>substrate</name>
    </ligand>
</feature>
<feature type="binding site" evidence="1">
    <location>
        <begin position="195"/>
        <end position="197"/>
    </location>
    <ligand>
        <name>substrate</name>
    </ligand>
</feature>
<feature type="binding site" evidence="1">
    <location>
        <position position="219"/>
    </location>
    <ligand>
        <name>substrate</name>
    </ligand>
</feature>
<feature type="binding site" evidence="1">
    <location>
        <position position="222"/>
    </location>
    <ligand>
        <name>Mn(2+)</name>
        <dbReference type="ChEBI" id="CHEBI:29035"/>
        <label>2</label>
    </ligand>
</feature>
<reference key="1">
    <citation type="journal article" date="2003" name="Appl. Microbiol. Biotechnol.">
        <title>The Corynebacterium glutamicum genome: features and impacts on biotechnological processes.</title>
        <authorList>
            <person name="Ikeda M."/>
            <person name="Nakagawa S."/>
        </authorList>
    </citation>
    <scope>NUCLEOTIDE SEQUENCE [LARGE SCALE GENOMIC DNA]</scope>
    <source>
        <strain>ATCC 13032 / DSM 20300 / JCM 1318 / BCRC 11384 / CCUG 27702 / LMG 3730 / NBRC 12168 / NCIMB 10025 / NRRL B-2784 / 534</strain>
    </source>
</reference>
<reference key="2">
    <citation type="journal article" date="2003" name="J. Biotechnol.">
        <title>The complete Corynebacterium glutamicum ATCC 13032 genome sequence and its impact on the production of L-aspartate-derived amino acids and vitamins.</title>
        <authorList>
            <person name="Kalinowski J."/>
            <person name="Bathe B."/>
            <person name="Bartels D."/>
            <person name="Bischoff N."/>
            <person name="Bott M."/>
            <person name="Burkovski A."/>
            <person name="Dusch N."/>
            <person name="Eggeling L."/>
            <person name="Eikmanns B.J."/>
            <person name="Gaigalat L."/>
            <person name="Goesmann A."/>
            <person name="Hartmann M."/>
            <person name="Huthmacher K."/>
            <person name="Kraemer R."/>
            <person name="Linke B."/>
            <person name="McHardy A.C."/>
            <person name="Meyer F."/>
            <person name="Moeckel B."/>
            <person name="Pfefferle W."/>
            <person name="Puehler A."/>
            <person name="Rey D.A."/>
            <person name="Rueckert C."/>
            <person name="Rupp O."/>
            <person name="Sahm H."/>
            <person name="Wendisch V.F."/>
            <person name="Wiegraebe I."/>
            <person name="Tauch A."/>
        </authorList>
    </citation>
    <scope>NUCLEOTIDE SEQUENCE [LARGE SCALE GENOMIC DNA]</scope>
    <source>
        <strain>ATCC 13032 / DSM 20300 / JCM 1318 / BCRC 11384 / CCUG 27702 / LMG 3730 / NBRC 12168 / NCIMB 10025 / NRRL B-2784 / 534</strain>
    </source>
</reference>
<reference key="3">
    <citation type="journal article" date="2003" name="Arch. Microbiol.">
        <title>Fructose-1,6-bisphosphatase from Corynebacterium glutamicum: expression and deletion of the fbp gene and biochemical characterization of the enzyme.</title>
        <authorList>
            <person name="Rittmann D."/>
            <person name="Schaffer S."/>
            <person name="Wendisch V.F."/>
            <person name="Sahm H."/>
        </authorList>
    </citation>
    <scope>IDENTIFICATION BY MASS SPECTROMETRY</scope>
    <scope>DETERMINATION OF TRANSLATIONAL START SITE</scope>
    <scope>FUNCTION</scope>
    <scope>CATALYTIC ACTIVITY</scope>
    <scope>SUBSTRATE SPECIFICITY</scope>
    <scope>COFACTOR</scope>
    <scope>ACTIVITY REGULATION</scope>
    <scope>BIOPHYSICOCHEMICAL PROPERTIES</scope>
    <scope>SUBUNIT</scope>
    <scope>INDUCTION</scope>
    <scope>DISRUPTION PHENOTYPE</scope>
    <source>
        <strain>ATCC 13032 / DSM 20300 / JCM 1318 / BCRC 11384 / CCUG 27702 / LMG 3730 / NBRC 12168 / NCIMB 10025 / NRRL B-2784 / 534</strain>
    </source>
</reference>
<sequence length="335" mass="35369">MNLKNPETPDRNLAMELVRVTEAAALASGRWVGRGMKNEGDGAAVDAMRQLINSVTMKGVVVIGEGEKDEAPMLYNGEEVGTGFGPEVDIAVDPVDGTTLMAEGRPNAISILAAAERGTMYDPSSVFYMKKIAVGPEAAGKIDIEAPVAHNINAVAKSKGINPSDVTVVVLDRPRHIELIADIRRAGAKVRLISDGDVAGAVAAAQDSNSVDIMMGTGGTPEGIITACAMKCMGGEIQGILAPMNDFERQKAHDAGLVLDQVLHTNDLVSSDNCYFVATGVTNGDMLRGVSYRANGATTRSLVMRAKSGTIRHIESVHQLSKLQEYSVVDYTTAT</sequence>
<gene>
    <name type="primary">glpX</name>
    <name type="synonym">fbp</name>
    <name type="ordered locus">Cgl1019</name>
    <name type="ordered locus">cg1157</name>
</gene>
<name>GLPX_CORGL</name>
<comment type="function">
    <text evidence="2">Catalyzes the hydrolysis of fructose 1,6-bisphosphate to fructose 6-phosphate. Is essential for growth on gluconeogenic carbon sources. Also displays a low activity toward glucose 6-phosphate, and fructose 6-phosphate, glycerol 3-phosphate, ribulose 1,5-bisphosphate and myo-inositol-monophosphate are not significant substrates.</text>
</comment>
<comment type="catalytic activity">
    <reaction evidence="2">
        <text>beta-D-fructose 1,6-bisphosphate + H2O = beta-D-fructose 6-phosphate + phosphate</text>
        <dbReference type="Rhea" id="RHEA:11064"/>
        <dbReference type="ChEBI" id="CHEBI:15377"/>
        <dbReference type="ChEBI" id="CHEBI:32966"/>
        <dbReference type="ChEBI" id="CHEBI:43474"/>
        <dbReference type="ChEBI" id="CHEBI:57634"/>
        <dbReference type="EC" id="3.1.3.11"/>
    </reaction>
</comment>
<comment type="cofactor">
    <cofactor evidence="2">
        <name>Mn(2+)</name>
        <dbReference type="ChEBI" id="CHEBI:29035"/>
    </cofactor>
    <cofactor evidence="2">
        <name>Mg(2+)</name>
        <dbReference type="ChEBI" id="CHEBI:18420"/>
    </cofactor>
    <text evidence="2">Manganese. Mn(2+) can be replaced by Mg(2+).</text>
</comment>
<comment type="activity regulation">
    <text evidence="2">Inhibited by the monovalent cation Li(+) with an inhibition constant of 140 uM. Also inhibited by AMP and phosphoenolpyruvate and to a lesser extent by phosphate, fructose 6-phosphate, fructose 2,6-bisphosphate, and UDP. ATP and ADP have no significant effects on FBPase activity.</text>
</comment>
<comment type="biophysicochemical properties">
    <kinetics>
        <KM evidence="2">14 uM for fructose 1,6-bisphosphate</KM>
        <Vmax evidence="2">5.4 umol/min/mg enzyme</Vmax>
    </kinetics>
    <phDependence>
        <text evidence="2">Optimum pH is 7.7.</text>
    </phDependence>
</comment>
<comment type="pathway">
    <text>Carbohydrate biosynthesis; gluconeogenesis.</text>
</comment>
<comment type="subunit">
    <text evidence="2">Homotetramer.</text>
</comment>
<comment type="subcellular location">
    <subcellularLocation>
        <location evidence="1">Cytoplasm</location>
    </subcellularLocation>
</comment>
<comment type="induction">
    <text evidence="2">The FBPase protein levels during growth on glucose, gluconate, ribose, pyruvate, lacatate, or citrate do not vary much (inferior or equal to two-fold) with respect to the carbon source.</text>
</comment>
<comment type="disruption phenotype">
    <text evidence="2">Strains lacking this gene are unable to grow on the carbon sources acetate, citrate, glutamate, and lactate and display no detectable fructose-1,6-bisphosphatase activity.</text>
</comment>
<comment type="similarity">
    <text evidence="3">Belongs to the FBPase class 2 family.</text>
</comment>
<comment type="sequence caution" evidence="3">
    <conflict type="erroneous initiation">
        <sequence resource="EMBL-CDS" id="BAB98412"/>
    </conflict>
    <text>Truncated N-terminus.</text>
</comment>
<protein>
    <recommendedName>
        <fullName>Fructose-1,6-bisphosphatase class 2</fullName>
        <shortName>FBPase class 2</shortName>
        <ecNumber>3.1.3.11</ecNumber>
    </recommendedName>
    <alternativeName>
        <fullName>D-fructose-1,6-bisphosphate 1-phosphohydrolase class 2</fullName>
    </alternativeName>
</protein>